<organism>
    <name type="scientific">Salmonella heidelberg (strain SL476)</name>
    <dbReference type="NCBI Taxonomy" id="454169"/>
    <lineage>
        <taxon>Bacteria</taxon>
        <taxon>Pseudomonadati</taxon>
        <taxon>Pseudomonadota</taxon>
        <taxon>Gammaproteobacteria</taxon>
        <taxon>Enterobacterales</taxon>
        <taxon>Enterobacteriaceae</taxon>
        <taxon>Salmonella</taxon>
    </lineage>
</organism>
<dbReference type="EMBL" id="CP001120">
    <property type="protein sequence ID" value="ACF70299.1"/>
    <property type="molecule type" value="Genomic_DNA"/>
</dbReference>
<dbReference type="RefSeq" id="WP_000749371.1">
    <property type="nucleotide sequence ID" value="NC_011083.1"/>
</dbReference>
<dbReference type="SMR" id="B4TAV5"/>
<dbReference type="KEGG" id="seh:SeHA_C4179"/>
<dbReference type="HOGENOM" id="CLU_039613_39_2_6"/>
<dbReference type="Proteomes" id="UP000001866">
    <property type="component" value="Chromosome"/>
</dbReference>
<dbReference type="GO" id="GO:0003677">
    <property type="term" value="F:DNA binding"/>
    <property type="evidence" value="ECO:0007669"/>
    <property type="project" value="UniProtKB-KW"/>
</dbReference>
<dbReference type="GO" id="GO:0003700">
    <property type="term" value="F:DNA-binding transcription factor activity"/>
    <property type="evidence" value="ECO:0007669"/>
    <property type="project" value="UniProtKB-UniRule"/>
</dbReference>
<dbReference type="CDD" id="cd08417">
    <property type="entry name" value="PBP2_Nitroaromatics_like"/>
    <property type="match status" value="1"/>
</dbReference>
<dbReference type="Gene3D" id="3.40.190.10">
    <property type="entry name" value="Periplasmic binding protein-like II"/>
    <property type="match status" value="2"/>
</dbReference>
<dbReference type="Gene3D" id="1.10.10.10">
    <property type="entry name" value="Winged helix-like DNA-binding domain superfamily/Winged helix DNA-binding domain"/>
    <property type="match status" value="1"/>
</dbReference>
<dbReference type="HAMAP" id="MF_01607">
    <property type="entry name" value="HTH_type_YidZ"/>
    <property type="match status" value="1"/>
</dbReference>
<dbReference type="InterPro" id="IPR050389">
    <property type="entry name" value="LysR-type_TF"/>
</dbReference>
<dbReference type="InterPro" id="IPR005119">
    <property type="entry name" value="LysR_subst-bd"/>
</dbReference>
<dbReference type="InterPro" id="IPR000847">
    <property type="entry name" value="Tscrpt_reg_HTH_LysR"/>
</dbReference>
<dbReference type="InterPro" id="IPR023746">
    <property type="entry name" value="Tscrpt_reg_YidZ"/>
</dbReference>
<dbReference type="InterPro" id="IPR036388">
    <property type="entry name" value="WH-like_DNA-bd_sf"/>
</dbReference>
<dbReference type="InterPro" id="IPR036390">
    <property type="entry name" value="WH_DNA-bd_sf"/>
</dbReference>
<dbReference type="InterPro" id="IPR037402">
    <property type="entry name" value="YidZ_PBP2"/>
</dbReference>
<dbReference type="NCBIfam" id="NF007581">
    <property type="entry name" value="PRK10216.1"/>
    <property type="match status" value="1"/>
</dbReference>
<dbReference type="PANTHER" id="PTHR30118">
    <property type="entry name" value="HTH-TYPE TRANSCRIPTIONAL REGULATOR LEUO-RELATED"/>
    <property type="match status" value="1"/>
</dbReference>
<dbReference type="PANTHER" id="PTHR30118:SF11">
    <property type="entry name" value="HTH-TYPE TRANSCRIPTIONAL REGULATOR YIDZ"/>
    <property type="match status" value="1"/>
</dbReference>
<dbReference type="Pfam" id="PF00126">
    <property type="entry name" value="HTH_1"/>
    <property type="match status" value="1"/>
</dbReference>
<dbReference type="Pfam" id="PF03466">
    <property type="entry name" value="LysR_substrate"/>
    <property type="match status" value="1"/>
</dbReference>
<dbReference type="SUPFAM" id="SSF53850">
    <property type="entry name" value="Periplasmic binding protein-like II"/>
    <property type="match status" value="1"/>
</dbReference>
<dbReference type="SUPFAM" id="SSF46785">
    <property type="entry name" value="Winged helix' DNA-binding domain"/>
    <property type="match status" value="1"/>
</dbReference>
<dbReference type="PROSITE" id="PS50931">
    <property type="entry name" value="HTH_LYSR"/>
    <property type="match status" value="1"/>
</dbReference>
<evidence type="ECO:0000255" key="1">
    <source>
        <dbReference type="HAMAP-Rule" id="MF_01607"/>
    </source>
</evidence>
<evidence type="ECO:0000305" key="2"/>
<gene>
    <name evidence="1" type="primary">yidZ</name>
    <name type="ordered locus">SeHA_C4179</name>
</gene>
<protein>
    <recommendedName>
        <fullName evidence="1">HTH-type transcriptional regulator YidZ</fullName>
    </recommendedName>
</protein>
<keyword id="KW-0238">DNA-binding</keyword>
<keyword id="KW-0804">Transcription</keyword>
<keyword id="KW-0805">Transcription regulation</keyword>
<proteinExistence type="inferred from homology"/>
<feature type="chain" id="PRO_1000148201" description="HTH-type transcriptional regulator YidZ">
    <location>
        <begin position="1"/>
        <end position="319"/>
    </location>
</feature>
<feature type="domain" description="HTH lysR-type" evidence="1">
    <location>
        <begin position="8"/>
        <end position="65"/>
    </location>
</feature>
<feature type="DNA-binding region" description="H-T-H motif" evidence="1">
    <location>
        <begin position="25"/>
        <end position="44"/>
    </location>
</feature>
<sequence>MKKSLTSLDLNLLLCLQLLMQERSVTKAAKRMNVTPSAVSKSLAKLRAWFDDPLFVNTPLGLAPTPLMVSMEQSLADWMQMGNQLLDKPHHQTPRGLKFELAAESPLMMIMFNSLSQQIYQRYPQATIKVRNWDYDSLEAITRGEVDIGFTGRESHPRSRELLSLLPLAIDFEVLFSDLPWVWLREDHPALREAWDLDTFLRYPHISICWEQSDTWALDDVLQEMGRKRHIALSLPGFEQSLFMAAQPGHTLIATAPRYCQHYNQLHQLPLVARPLPFDAQQREKLMVPFTLLWHKRNSHNPKIVWLRQAINTLCRRLI</sequence>
<accession>B4TAV5</accession>
<reference key="1">
    <citation type="journal article" date="2011" name="J. Bacteriol.">
        <title>Comparative genomics of 28 Salmonella enterica isolates: evidence for CRISPR-mediated adaptive sublineage evolution.</title>
        <authorList>
            <person name="Fricke W.F."/>
            <person name="Mammel M.K."/>
            <person name="McDermott P.F."/>
            <person name="Tartera C."/>
            <person name="White D.G."/>
            <person name="Leclerc J.E."/>
            <person name="Ravel J."/>
            <person name="Cebula T.A."/>
        </authorList>
    </citation>
    <scope>NUCLEOTIDE SEQUENCE [LARGE SCALE GENOMIC DNA]</scope>
    <source>
        <strain>SL476</strain>
    </source>
</reference>
<name>YIDZ_SALHS</name>
<comment type="function">
    <text evidence="1">Involved in anaerobic NO protection.</text>
</comment>
<comment type="similarity">
    <text evidence="2">Belongs to the LysR transcriptional regulatory family.</text>
</comment>